<sequence length="491" mass="54292">MYRVRSMESTATSSPSSSLMVHPTNFRVIIVGGSIAGLTLAHCLSKIGVDYVILEKRQQIAPQEGASIGILPHGGRILDQLGLFNAIQRNVEPLTTAHISYPNGFTHTNQSPTLIHERFGLPLAFLERRKLLQILYWSLPDTSRVQVGKTVVSVDHIWGDSGMAVRTRDGSTFYGDIVVGADGVHSRVRHEMWRLAEIDLPGSITEREKDGMTVDYICVFGISASVPDLRPGEQVASLHDGRSFLVFPGKDGRVFWFLLKKLDRRYTYTSAPRLTPLDIDTIAGSFISDHIWNGVSFGSLWERREVTGVTNLEENVFSTWHSGRIVCIGDSMHKMAPNTGQGANCAIEDAAALANAIHGAIEHVDRPSMAEVQSFLRSFNESRLPRVREIYKSASVVVRLHARENLALRLVGRYYLPYSGDVPANTASKLIADGVQLSFLAPSLHSGPGWEKYSMKNGVAKSTVVWTSLGILGLVVFLFLLFRVRARFSSF</sequence>
<dbReference type="EC" id="1.-.-.-" evidence="4"/>
<dbReference type="EMBL" id="LC422695">
    <property type="protein sequence ID" value="BBG28473.1"/>
    <property type="molecule type" value="Genomic_DNA"/>
</dbReference>
<dbReference type="SMR" id="A0A3T0ZHL2"/>
<dbReference type="VEuPathDB" id="FungiDB:ASPVEDRAFT_872267"/>
<dbReference type="UniPathway" id="UPA00213"/>
<dbReference type="GO" id="GO:0016020">
    <property type="term" value="C:membrane"/>
    <property type="evidence" value="ECO:0007669"/>
    <property type="project" value="UniProtKB-SubCell"/>
</dbReference>
<dbReference type="GO" id="GO:0071949">
    <property type="term" value="F:FAD binding"/>
    <property type="evidence" value="ECO:0007669"/>
    <property type="project" value="InterPro"/>
</dbReference>
<dbReference type="GO" id="GO:0004497">
    <property type="term" value="F:monooxygenase activity"/>
    <property type="evidence" value="ECO:0007669"/>
    <property type="project" value="UniProtKB-KW"/>
</dbReference>
<dbReference type="GO" id="GO:0009058">
    <property type="term" value="P:biosynthetic process"/>
    <property type="evidence" value="ECO:0007669"/>
    <property type="project" value="UniProtKB-ARBA"/>
</dbReference>
<dbReference type="Gene3D" id="3.50.50.60">
    <property type="entry name" value="FAD/NAD(P)-binding domain"/>
    <property type="match status" value="1"/>
</dbReference>
<dbReference type="InterPro" id="IPR002938">
    <property type="entry name" value="FAD-bd"/>
</dbReference>
<dbReference type="InterPro" id="IPR036188">
    <property type="entry name" value="FAD/NAD-bd_sf"/>
</dbReference>
<dbReference type="InterPro" id="IPR050562">
    <property type="entry name" value="FAD_mOase_fung"/>
</dbReference>
<dbReference type="PANTHER" id="PTHR47356:SF2">
    <property type="entry name" value="FAD-BINDING DOMAIN-CONTAINING PROTEIN-RELATED"/>
    <property type="match status" value="1"/>
</dbReference>
<dbReference type="PANTHER" id="PTHR47356">
    <property type="entry name" value="FAD-DEPENDENT MONOOXYGENASE ASQG-RELATED"/>
    <property type="match status" value="1"/>
</dbReference>
<dbReference type="Pfam" id="PF01494">
    <property type="entry name" value="FAD_binding_3"/>
    <property type="match status" value="2"/>
</dbReference>
<dbReference type="PRINTS" id="PR00420">
    <property type="entry name" value="RNGMNOXGNASE"/>
</dbReference>
<dbReference type="SUPFAM" id="SSF51905">
    <property type="entry name" value="FAD/NAD(P)-binding domain"/>
    <property type="match status" value="1"/>
</dbReference>
<protein>
    <recommendedName>
        <fullName evidence="5">FAD-dependent monooxygenase cle3</fullName>
        <ecNumber evidence="4">1.-.-.-</ecNumber>
    </recommendedName>
    <alternativeName>
        <fullName evidence="5">Chevalone E biosynthesis cluster protein 3</fullName>
    </alternativeName>
</protein>
<comment type="function">
    <text evidence="4">FAD-dependent monooxygenase; part of the cluster A that mediates the biosynthesis of chevalone E and its oxidized derivatives that possess a unique five-membered lactone ring and can synergistically enhance the cytotoxicity of doxorubicin (DOX) in breast cancer cells (Ref.1). Within the pathway, cle3 takes part to the biosynthesis of the molecular scaffold by catalyzing the formation of an (S)-epoxide ring at the terminal olefin of the geranylgeranyl group (Ref.1). The molecular scaffold is commonly biosynthesized by a series of enzymes including the non-reducing polyketide synthase (NR-PKS) cle1 that produces the alpha-pyrone triacetic acid lactone (TAL); The membrane-bound prenyltransferase cle5 that accepts TAL as its substrate to perform a C-3 geranylgeranylation reaction, in which the pathway-dedicated GGPS cle6 is required to provide GGPP, the other substrate of cle5; the FAD-dependent monooxygenase Cle3 that forms an (S)-epoxide ring at the terminal olefin of the geranylgeranyl group; and the terpene cyclase Cle7 that catalyzes the cyclization of the prenyl group that yields the pentacyclic pathway intermediate chevalone E (Ref.1). Chevalone E can derivatize into seven new oxidized analogs by the cytochrome P450 monooxygenases cle2 (acting at C-20) and cle4 (acting at C-11 and C-12) (Ref.1).</text>
</comment>
<comment type="cofactor">
    <cofactor evidence="6">
        <name>FAD</name>
        <dbReference type="ChEBI" id="CHEBI:57692"/>
    </cofactor>
</comment>
<comment type="pathway">
    <text evidence="4">Secondary metabolite biosynthesis; terpenoid biosynthesis.</text>
</comment>
<comment type="subcellular location">
    <subcellularLocation>
        <location evidence="2">Membrane</location>
        <topology evidence="2">Single-pass membrane protein</topology>
    </subcellularLocation>
</comment>
<comment type="biotechnology">
    <text evidence="4">Chevalone E derivatives produced by this cluster are interesting candidates for cancer therapy since they synergistically enhance the cytotoxicity of doxorubicin (DOX) in both MDA-MB-231 and MCF-7 breast cancer cell lines.</text>
</comment>
<comment type="similarity">
    <text evidence="6">Belongs to the paxM FAD-dependent monooxygenase family.</text>
</comment>
<keyword id="KW-0274">FAD</keyword>
<keyword id="KW-0285">Flavoprotein</keyword>
<keyword id="KW-0325">Glycoprotein</keyword>
<keyword id="KW-0472">Membrane</keyword>
<keyword id="KW-0503">Monooxygenase</keyword>
<keyword id="KW-0560">Oxidoreductase</keyword>
<keyword id="KW-0812">Transmembrane</keyword>
<keyword id="KW-1133">Transmembrane helix</keyword>
<organism>
    <name type="scientific">Aspergillus versicolor</name>
    <dbReference type="NCBI Taxonomy" id="46472"/>
    <lineage>
        <taxon>Eukaryota</taxon>
        <taxon>Fungi</taxon>
        <taxon>Dikarya</taxon>
        <taxon>Ascomycota</taxon>
        <taxon>Pezizomycotina</taxon>
        <taxon>Eurotiomycetes</taxon>
        <taxon>Eurotiomycetidae</taxon>
        <taxon>Eurotiales</taxon>
        <taxon>Aspergillaceae</taxon>
        <taxon>Aspergillus</taxon>
        <taxon>Aspergillus subgen. Nidulantes</taxon>
    </lineage>
</organism>
<evidence type="ECO:0000250" key="1">
    <source>
        <dbReference type="UniProtKB" id="B8M9J8"/>
    </source>
</evidence>
<evidence type="ECO:0000255" key="2"/>
<evidence type="ECO:0000255" key="3">
    <source>
        <dbReference type="PROSITE-ProRule" id="PRU00498"/>
    </source>
</evidence>
<evidence type="ECO:0000269" key="4">
    <source ref="1"/>
</evidence>
<evidence type="ECO:0000303" key="5">
    <source ref="1"/>
</evidence>
<evidence type="ECO:0000305" key="6"/>
<reference key="1">
    <citation type="journal article" date="2019" name="Org. Chem. Front.">
        <title>Genome mining for fungal polyketide-diterpenoid hybrids: discovery of key terpene cyclases and multifunctional P450s for structural diversification.</title>
        <authorList>
            <person name="Wang W.G."/>
            <person name="Du L.Q."/>
            <person name="Sheng S.L."/>
            <person name="Li A."/>
            <person name="Li Y.P."/>
            <person name="Cheng G.G."/>
            <person name="Li G.P."/>
            <person name="Sun G."/>
            <person name="Hu Q."/>
            <person name="Matsuda Y."/>
        </authorList>
    </citation>
    <scope>NUCLEOTIDE SEQUENCE [GENOMIC DNA]</scope>
    <scope>FUNCTION</scope>
    <scope>CATALYTIC ACTIVITY</scope>
    <scope>PATHWAY</scope>
    <scope>BIOTECHNOLOGY</scope>
    <source>
        <strain>0312</strain>
    </source>
</reference>
<proteinExistence type="evidence at protein level"/>
<gene>
    <name evidence="5" type="primary">cle3</name>
</gene>
<name>CLE3_ASPVE</name>
<feature type="chain" id="PRO_0000461050" description="FAD-dependent monooxygenase cle3">
    <location>
        <begin position="1"/>
        <end position="491"/>
    </location>
</feature>
<feature type="transmembrane region" description="Helical" evidence="2">
    <location>
        <begin position="462"/>
        <end position="482"/>
    </location>
</feature>
<feature type="binding site" evidence="1">
    <location>
        <position position="55"/>
    </location>
    <ligand>
        <name>FAD</name>
        <dbReference type="ChEBI" id="CHEBI:57692"/>
    </ligand>
</feature>
<feature type="binding site" evidence="1">
    <location>
        <position position="69"/>
    </location>
    <ligand>
        <name>FAD</name>
        <dbReference type="ChEBI" id="CHEBI:57692"/>
    </ligand>
</feature>
<feature type="binding site" evidence="1">
    <location>
        <position position="128"/>
    </location>
    <ligand>
        <name>FAD</name>
        <dbReference type="ChEBI" id="CHEBI:57692"/>
    </ligand>
</feature>
<feature type="binding site" evidence="1">
    <location>
        <position position="330"/>
    </location>
    <ligand>
        <name>FAD</name>
        <dbReference type="ChEBI" id="CHEBI:57692"/>
    </ligand>
</feature>
<feature type="binding site" evidence="1">
    <location>
        <position position="343"/>
    </location>
    <ligand>
        <name>FAD</name>
        <dbReference type="ChEBI" id="CHEBI:57692"/>
    </ligand>
</feature>
<feature type="glycosylation site" description="N-linked (GlcNAc...) asparagine" evidence="3">
    <location>
        <position position="380"/>
    </location>
</feature>
<accession>A0A3T0ZHL2</accession>